<feature type="chain" id="PRO_0000094096" description="Antichymotrypsin-2">
    <location>
        <begin position="1"/>
        <end position="375"/>
    </location>
</feature>
<feature type="site" description="Reactive bond">
    <location>
        <begin position="340"/>
        <end position="341"/>
    </location>
</feature>
<keyword id="KW-0903">Direct protein sequencing</keyword>
<keyword id="KW-0646">Protease inhibitor</keyword>
<keyword id="KW-1185">Reference proteome</keyword>
<keyword id="KW-0964">Secreted</keyword>
<keyword id="KW-0722">Serine protease inhibitor</keyword>
<comment type="subcellular location">
    <subcellularLocation>
        <location>Secreted</location>
    </subcellularLocation>
</comment>
<comment type="tissue specificity">
    <text>Hemolymph.</text>
</comment>
<comment type="domain">
    <text evidence="1">The reactive center loop (RCL) extends out from the body of the protein and directs binding to the target protease. The protease cleaves the serpin at the reactive site within the RCL, establishing a covalent linkage between the serpin reactive site and the active site of the protease. The resulting inactive serpin-protease complex is highly stable (By similarity).</text>
</comment>
<comment type="miscellaneous">
    <text>The N-terminal section (1-336) is identical to the N-terminal section of the silk moth antitrypsin I (17-352).</text>
</comment>
<comment type="similarity">
    <text evidence="2">Belongs to the serpin family.</text>
</comment>
<name>ACH2_BOMMO</name>
<evidence type="ECO:0000250" key="1"/>
<evidence type="ECO:0000305" key="2"/>
<organism>
    <name type="scientific">Bombyx mori</name>
    <name type="common">Silk moth</name>
    <dbReference type="NCBI Taxonomy" id="7091"/>
    <lineage>
        <taxon>Eukaryota</taxon>
        <taxon>Metazoa</taxon>
        <taxon>Ecdysozoa</taxon>
        <taxon>Arthropoda</taxon>
        <taxon>Hexapoda</taxon>
        <taxon>Insecta</taxon>
        <taxon>Pterygota</taxon>
        <taxon>Neoptera</taxon>
        <taxon>Endopterygota</taxon>
        <taxon>Lepidoptera</taxon>
        <taxon>Glossata</taxon>
        <taxon>Ditrysia</taxon>
        <taxon>Bombycoidea</taxon>
        <taxon>Bombycidae</taxon>
        <taxon>Bombycinae</taxon>
        <taxon>Bombyx</taxon>
    </lineage>
</organism>
<reference key="1">
    <citation type="journal article" date="1991" name="Eur. J. Biochem.">
        <title>Patchwork-structure serpins from silkworm (Bombyx mori) larval hemolymph.</title>
        <authorList>
            <person name="Sasaki T."/>
        </authorList>
    </citation>
    <scope>PROTEIN SEQUENCE</scope>
    <source>
        <strain>Kinshu X Showa</strain>
        <tissue>Larval hemolymph</tissue>
    </source>
</reference>
<proteinExistence type="evidence at protein level"/>
<accession>P80034</accession>
<sequence length="375" mass="41458">AVTNLSNVLKNGNDNFTARMFTEVVKNNPGKSIVLSAFSVLPPLAQLALASDGETHEELLKAIGFPDDDAIRTEFASKSRDLRSIKGVELKMANKVYVHDGGKLDENFAVVSRDVFNSDVQNIDFSKNTVAAKSINDWVEENTNNRIKDLVNPDSLSSATAAVLVNAIYFKGAWSSKFDERLTSDRDFYVSKDKTIKVPMMYKRGDYKYGESAVLNAQLIEIPYKGDQSSLIVVLPKDKDGITQLQEALKDPKTLETAQQSMYSTEVDLYLPKFKIETETNLKDVLSNMNVNKIFNNDAQITRLLKGESLSVSEAIQKAFIEINEEGAEAAAANAFAVVFMSAVVSQPLVFKANHPFVFFLKGDGVTLFNGVFHP</sequence>
<protein>
    <recommendedName>
        <fullName>Antichymotrypsin-2</fullName>
    </recommendedName>
    <alternativeName>
        <fullName>Antichymotrypsin II</fullName>
        <shortName>ACHY-II</shortName>
    </alternativeName>
</protein>
<dbReference type="PIR" id="S19546">
    <property type="entry name" value="S19546"/>
</dbReference>
<dbReference type="SMR" id="P80034"/>
<dbReference type="FunCoup" id="P80034">
    <property type="interactions" value="81"/>
</dbReference>
<dbReference type="STRING" id="7091.P80034"/>
<dbReference type="HOGENOM" id="CLU_023330_2_0_1"/>
<dbReference type="InParanoid" id="P80034"/>
<dbReference type="Proteomes" id="UP000005204">
    <property type="component" value="Unassembled WGS sequence"/>
</dbReference>
<dbReference type="GO" id="GO:0005615">
    <property type="term" value="C:extracellular space"/>
    <property type="evidence" value="ECO:0007669"/>
    <property type="project" value="InterPro"/>
</dbReference>
<dbReference type="GO" id="GO:0004867">
    <property type="term" value="F:serine-type endopeptidase inhibitor activity"/>
    <property type="evidence" value="ECO:0007669"/>
    <property type="project" value="UniProtKB-KW"/>
</dbReference>
<dbReference type="CDD" id="cd19579">
    <property type="entry name" value="serpin1K-like"/>
    <property type="match status" value="1"/>
</dbReference>
<dbReference type="Gene3D" id="2.30.39.10">
    <property type="entry name" value="Alpha-1-antitrypsin, domain 1"/>
    <property type="match status" value="1"/>
</dbReference>
<dbReference type="Gene3D" id="3.30.497.10">
    <property type="entry name" value="Antithrombin, subunit I, domain 2"/>
    <property type="match status" value="1"/>
</dbReference>
<dbReference type="InterPro" id="IPR023795">
    <property type="entry name" value="Serpin_CS"/>
</dbReference>
<dbReference type="InterPro" id="IPR023796">
    <property type="entry name" value="Serpin_dom"/>
</dbReference>
<dbReference type="InterPro" id="IPR000215">
    <property type="entry name" value="Serpin_fam"/>
</dbReference>
<dbReference type="InterPro" id="IPR036186">
    <property type="entry name" value="Serpin_sf"/>
</dbReference>
<dbReference type="InterPro" id="IPR042178">
    <property type="entry name" value="Serpin_sf_1"/>
</dbReference>
<dbReference type="InterPro" id="IPR042185">
    <property type="entry name" value="Serpin_sf_2"/>
</dbReference>
<dbReference type="PANTHER" id="PTHR11461:SF211">
    <property type="entry name" value="GH10112P-RELATED"/>
    <property type="match status" value="1"/>
</dbReference>
<dbReference type="PANTHER" id="PTHR11461">
    <property type="entry name" value="SERINE PROTEASE INHIBITOR, SERPIN"/>
    <property type="match status" value="1"/>
</dbReference>
<dbReference type="Pfam" id="PF00079">
    <property type="entry name" value="Serpin"/>
    <property type="match status" value="1"/>
</dbReference>
<dbReference type="SMART" id="SM00093">
    <property type="entry name" value="SERPIN"/>
    <property type="match status" value="1"/>
</dbReference>
<dbReference type="SUPFAM" id="SSF56574">
    <property type="entry name" value="Serpins"/>
    <property type="match status" value="1"/>
</dbReference>
<dbReference type="PROSITE" id="PS00284">
    <property type="entry name" value="SERPIN"/>
    <property type="match status" value="1"/>
</dbReference>